<organism>
    <name type="scientific">Saccharolobus solfataricus (strain ATCC 35092 / DSM 1617 / JCM 11322 / P2)</name>
    <name type="common">Sulfolobus solfataricus</name>
    <dbReference type="NCBI Taxonomy" id="273057"/>
    <lineage>
        <taxon>Archaea</taxon>
        <taxon>Thermoproteota</taxon>
        <taxon>Thermoprotei</taxon>
        <taxon>Sulfolobales</taxon>
        <taxon>Sulfolobaceae</taxon>
        <taxon>Saccharolobus</taxon>
    </lineage>
</organism>
<reference key="1">
    <citation type="journal article" date="2001" name="Proc. Natl. Acad. Sci. U.S.A.">
        <title>The complete genome of the crenarchaeon Sulfolobus solfataricus P2.</title>
        <authorList>
            <person name="She Q."/>
            <person name="Singh R.K."/>
            <person name="Confalonieri F."/>
            <person name="Zivanovic Y."/>
            <person name="Allard G."/>
            <person name="Awayez M.J."/>
            <person name="Chan-Weiher C.C.-Y."/>
            <person name="Clausen I.G."/>
            <person name="Curtis B.A."/>
            <person name="De Moors A."/>
            <person name="Erauso G."/>
            <person name="Fletcher C."/>
            <person name="Gordon P.M.K."/>
            <person name="Heikamp-de Jong I."/>
            <person name="Jeffries A.C."/>
            <person name="Kozera C.J."/>
            <person name="Medina N."/>
            <person name="Peng X."/>
            <person name="Thi-Ngoc H.P."/>
            <person name="Redder P."/>
            <person name="Schenk M.E."/>
            <person name="Theriault C."/>
            <person name="Tolstrup N."/>
            <person name="Charlebois R.L."/>
            <person name="Doolittle W.F."/>
            <person name="Duguet M."/>
            <person name="Gaasterland T."/>
            <person name="Garrett R.A."/>
            <person name="Ragan M.A."/>
            <person name="Sensen C.W."/>
            <person name="Van der Oost J."/>
        </authorList>
    </citation>
    <scope>NUCLEOTIDE SEQUENCE [LARGE SCALE GENOMIC DNA]</scope>
    <source>
        <strain>ATCC 35092 / DSM 1617 / JCM 11322 / P2</strain>
    </source>
</reference>
<proteinExistence type="evidence at protein level"/>
<evidence type="ECO:0000255" key="1">
    <source>
        <dbReference type="HAMAP-Rule" id="MF_01364"/>
    </source>
</evidence>
<evidence type="ECO:0000305" key="2"/>
<keyword id="KW-0002">3D-structure</keyword>
<keyword id="KW-0479">Metal-binding</keyword>
<keyword id="KW-1185">Reference proteome</keyword>
<keyword id="KW-0687">Ribonucleoprotein</keyword>
<keyword id="KW-0689">Ribosomal protein</keyword>
<keyword id="KW-0694">RNA-binding</keyword>
<keyword id="KW-0699">rRNA-binding</keyword>
<keyword id="KW-0862">Zinc</keyword>
<gene>
    <name evidence="1" type="primary">rps14</name>
    <name evidence="1" type="synonym">rps14Ab</name>
    <name type="ordered locus">SSO6391</name>
</gene>
<accession>Q97ZQ5</accession>
<comment type="function">
    <text evidence="1">Binds 16S rRNA, required for the assembly of 30S particles.</text>
</comment>
<comment type="cofactor">
    <cofactor evidence="1">
        <name>Zn(2+)</name>
        <dbReference type="ChEBI" id="CHEBI:29105"/>
    </cofactor>
    <text evidence="1">Binds 1 zinc ion per subunit.</text>
</comment>
<comment type="subunit">
    <text evidence="1">Part of the 30S ribosomal subunit.</text>
</comment>
<comment type="similarity">
    <text evidence="1">Belongs to the universal ribosomal protein uS14 family. Zinc-binding uS14 subfamily.</text>
</comment>
<comment type="sequence caution" evidence="2">
    <conflict type="erroneous initiation">
        <sequence resource="EMBL-CDS" id="AAK41005"/>
    </conflict>
    <text>Extended N-terminus.</text>
</comment>
<dbReference type="EMBL" id="AE006641">
    <property type="protein sequence ID" value="AAK41005.1"/>
    <property type="status" value="ALT_INIT"/>
    <property type="molecule type" value="Genomic_DNA"/>
</dbReference>
<dbReference type="PIR" id="F90218">
    <property type="entry name" value="F90218"/>
</dbReference>
<dbReference type="RefSeq" id="WP_009991264.1">
    <property type="nucleotide sequence ID" value="NC_002754.1"/>
</dbReference>
<dbReference type="PDB" id="9FHL">
    <property type="method" value="EM"/>
    <property type="resolution" value="2.50 A"/>
    <property type="chains" value="P=1-54"/>
</dbReference>
<dbReference type="PDB" id="9FRA">
    <property type="method" value="EM"/>
    <property type="resolution" value="2.80 A"/>
    <property type="chains" value="P=1-54"/>
</dbReference>
<dbReference type="PDB" id="9FRK">
    <property type="method" value="EM"/>
    <property type="resolution" value="3.00 A"/>
    <property type="chains" value="P=1-54"/>
</dbReference>
<dbReference type="PDB" id="9FRL">
    <property type="method" value="EM"/>
    <property type="resolution" value="2.97 A"/>
    <property type="chains" value="P=1-54"/>
</dbReference>
<dbReference type="PDB" id="9FS6">
    <property type="method" value="EM"/>
    <property type="resolution" value="2.90 A"/>
    <property type="chains" value="P=1-54"/>
</dbReference>
<dbReference type="PDB" id="9FS8">
    <property type="method" value="EM"/>
    <property type="resolution" value="3.70 A"/>
    <property type="chains" value="P=1-54"/>
</dbReference>
<dbReference type="PDB" id="9FSF">
    <property type="method" value="EM"/>
    <property type="resolution" value="2.80 A"/>
    <property type="chains" value="P=1-54"/>
</dbReference>
<dbReference type="PDB" id="9FY0">
    <property type="method" value="EM"/>
    <property type="resolution" value="2.90 A"/>
    <property type="chains" value="P=1-54"/>
</dbReference>
<dbReference type="PDBsum" id="9FHL"/>
<dbReference type="PDBsum" id="9FRA"/>
<dbReference type="PDBsum" id="9FRK"/>
<dbReference type="PDBsum" id="9FRL"/>
<dbReference type="PDBsum" id="9FS6"/>
<dbReference type="PDBsum" id="9FS8"/>
<dbReference type="PDBsum" id="9FSF"/>
<dbReference type="PDBsum" id="9FY0"/>
<dbReference type="EMDB" id="EMD-50445"/>
<dbReference type="EMDB" id="EMD-50709"/>
<dbReference type="EMDB" id="EMD-50716"/>
<dbReference type="EMDB" id="EMD-50717"/>
<dbReference type="EMDB" id="EMD-50724"/>
<dbReference type="EMDB" id="EMD-50725"/>
<dbReference type="EMDB" id="EMD-50727"/>
<dbReference type="EMDB" id="EMD-50854"/>
<dbReference type="SMR" id="Q97ZQ5"/>
<dbReference type="FunCoup" id="Q97ZQ5">
    <property type="interactions" value="214"/>
</dbReference>
<dbReference type="STRING" id="273057.SSO6391"/>
<dbReference type="PaxDb" id="273057-SSO6391"/>
<dbReference type="EnsemblBacteria" id="AAK41005">
    <property type="protein sequence ID" value="AAK41005"/>
    <property type="gene ID" value="SSO6391"/>
</dbReference>
<dbReference type="KEGG" id="sso:SSO6391"/>
<dbReference type="PATRIC" id="fig|273057.12.peg.704"/>
<dbReference type="eggNOG" id="arCOG00782">
    <property type="taxonomic scope" value="Archaea"/>
</dbReference>
<dbReference type="HOGENOM" id="CLU_177289_2_2_2"/>
<dbReference type="InParanoid" id="Q97ZQ5"/>
<dbReference type="PhylomeDB" id="Q97ZQ5"/>
<dbReference type="Proteomes" id="UP000001974">
    <property type="component" value="Chromosome"/>
</dbReference>
<dbReference type="GO" id="GO:0022627">
    <property type="term" value="C:cytosolic small ribosomal subunit"/>
    <property type="evidence" value="ECO:0000318"/>
    <property type="project" value="GO_Central"/>
</dbReference>
<dbReference type="GO" id="GO:0019843">
    <property type="term" value="F:rRNA binding"/>
    <property type="evidence" value="ECO:0007669"/>
    <property type="project" value="UniProtKB-UniRule"/>
</dbReference>
<dbReference type="GO" id="GO:0003735">
    <property type="term" value="F:structural constituent of ribosome"/>
    <property type="evidence" value="ECO:0000318"/>
    <property type="project" value="GO_Central"/>
</dbReference>
<dbReference type="GO" id="GO:0008270">
    <property type="term" value="F:zinc ion binding"/>
    <property type="evidence" value="ECO:0000318"/>
    <property type="project" value="GO_Central"/>
</dbReference>
<dbReference type="GO" id="GO:0002181">
    <property type="term" value="P:cytoplasmic translation"/>
    <property type="evidence" value="ECO:0000318"/>
    <property type="project" value="GO_Central"/>
</dbReference>
<dbReference type="FunFam" id="4.10.830.10:FF:000002">
    <property type="entry name" value="40S ribosomal protein S29"/>
    <property type="match status" value="1"/>
</dbReference>
<dbReference type="Gene3D" id="4.10.830.10">
    <property type="entry name" value="30s Ribosomal Protein S14, Chain N"/>
    <property type="match status" value="1"/>
</dbReference>
<dbReference type="HAMAP" id="MF_01364_A">
    <property type="entry name" value="Ribosomal_uS14_2_A"/>
    <property type="match status" value="1"/>
</dbReference>
<dbReference type="InterPro" id="IPR001209">
    <property type="entry name" value="Ribosomal_uS14"/>
</dbReference>
<dbReference type="InterPro" id="IPR023676">
    <property type="entry name" value="Ribosomal_uS14_arc"/>
</dbReference>
<dbReference type="InterPro" id="IPR018271">
    <property type="entry name" value="Ribosomal_uS14_CS"/>
</dbReference>
<dbReference type="InterPro" id="IPR039744">
    <property type="entry name" value="RIbosomal_uS14_euk_arc"/>
</dbReference>
<dbReference type="InterPro" id="IPR043140">
    <property type="entry name" value="Ribosomal_uS14_sf"/>
</dbReference>
<dbReference type="NCBIfam" id="NF004424">
    <property type="entry name" value="PRK05766.1"/>
    <property type="match status" value="1"/>
</dbReference>
<dbReference type="PANTHER" id="PTHR12010">
    <property type="entry name" value="40S RIBOSOMAL PROTEIN S29"/>
    <property type="match status" value="1"/>
</dbReference>
<dbReference type="PANTHER" id="PTHR12010:SF2">
    <property type="entry name" value="40S RIBOSOMAL PROTEIN S29"/>
    <property type="match status" value="1"/>
</dbReference>
<dbReference type="Pfam" id="PF00253">
    <property type="entry name" value="Ribosomal_S14"/>
    <property type="match status" value="1"/>
</dbReference>
<dbReference type="PROSITE" id="PS00527">
    <property type="entry name" value="RIBOSOMAL_S14"/>
    <property type="match status" value="1"/>
</dbReference>
<feature type="chain" id="PRO_0000130999" description="Small ribosomal subunit protein uS14">
    <location>
        <begin position="1"/>
        <end position="54"/>
    </location>
</feature>
<feature type="binding site" evidence="1">
    <location>
        <position position="19"/>
    </location>
    <ligand>
        <name>Zn(2+)</name>
        <dbReference type="ChEBI" id="CHEBI:29105"/>
    </ligand>
</feature>
<feature type="binding site" evidence="1">
    <location>
        <position position="22"/>
    </location>
    <ligand>
        <name>Zn(2+)</name>
        <dbReference type="ChEBI" id="CHEBI:29105"/>
    </ligand>
</feature>
<feature type="binding site" evidence="1">
    <location>
        <position position="37"/>
    </location>
    <ligand>
        <name>Zn(2+)</name>
        <dbReference type="ChEBI" id="CHEBI:29105"/>
    </ligand>
</feature>
<feature type="binding site" evidence="1">
    <location>
        <position position="40"/>
    </location>
    <ligand>
        <name>Zn(2+)</name>
        <dbReference type="ChEBI" id="CHEBI:29105"/>
    </ligand>
</feature>
<name>RS14Z_SACS2</name>
<protein>
    <recommendedName>
        <fullName evidence="1">Small ribosomal subunit protein uS14</fullName>
    </recommendedName>
    <alternativeName>
        <fullName evidence="2">30S ribosomal protein S14 type Z</fullName>
    </alternativeName>
</protein>
<sequence>MGKYKPPAERKYGKGVQSCQRCGSKDSVIQKYGIYLCRQCFREVAYELGFRKYW</sequence>